<proteinExistence type="inferred from homology"/>
<reference key="1">
    <citation type="journal article" date="2004" name="Nature">
        <title>Genome evolution in yeasts.</title>
        <authorList>
            <person name="Dujon B."/>
            <person name="Sherman D."/>
            <person name="Fischer G."/>
            <person name="Durrens P."/>
            <person name="Casaregola S."/>
            <person name="Lafontaine I."/>
            <person name="de Montigny J."/>
            <person name="Marck C."/>
            <person name="Neuveglise C."/>
            <person name="Talla E."/>
            <person name="Goffard N."/>
            <person name="Frangeul L."/>
            <person name="Aigle M."/>
            <person name="Anthouard V."/>
            <person name="Babour A."/>
            <person name="Barbe V."/>
            <person name="Barnay S."/>
            <person name="Blanchin S."/>
            <person name="Beckerich J.-M."/>
            <person name="Beyne E."/>
            <person name="Bleykasten C."/>
            <person name="Boisrame A."/>
            <person name="Boyer J."/>
            <person name="Cattolico L."/>
            <person name="Confanioleri F."/>
            <person name="de Daruvar A."/>
            <person name="Despons L."/>
            <person name="Fabre E."/>
            <person name="Fairhead C."/>
            <person name="Ferry-Dumazet H."/>
            <person name="Groppi A."/>
            <person name="Hantraye F."/>
            <person name="Hennequin C."/>
            <person name="Jauniaux N."/>
            <person name="Joyet P."/>
            <person name="Kachouri R."/>
            <person name="Kerrest A."/>
            <person name="Koszul R."/>
            <person name="Lemaire M."/>
            <person name="Lesur I."/>
            <person name="Ma L."/>
            <person name="Muller H."/>
            <person name="Nicaud J.-M."/>
            <person name="Nikolski M."/>
            <person name="Oztas S."/>
            <person name="Ozier-Kalogeropoulos O."/>
            <person name="Pellenz S."/>
            <person name="Potier S."/>
            <person name="Richard G.-F."/>
            <person name="Straub M.-L."/>
            <person name="Suleau A."/>
            <person name="Swennen D."/>
            <person name="Tekaia F."/>
            <person name="Wesolowski-Louvel M."/>
            <person name="Westhof E."/>
            <person name="Wirth B."/>
            <person name="Zeniou-Meyer M."/>
            <person name="Zivanovic Y."/>
            <person name="Bolotin-Fukuhara M."/>
            <person name="Thierry A."/>
            <person name="Bouchier C."/>
            <person name="Caudron B."/>
            <person name="Scarpelli C."/>
            <person name="Gaillardin C."/>
            <person name="Weissenbach J."/>
            <person name="Wincker P."/>
            <person name="Souciet J.-L."/>
        </authorList>
    </citation>
    <scope>NUCLEOTIDE SEQUENCE [LARGE SCALE GENOMIC DNA]</scope>
    <source>
        <strain>ATCC 2001 / BCRC 20586 / JCM 3761 / NBRC 0622 / NRRL Y-65 / CBS 138</strain>
    </source>
</reference>
<comment type="function">
    <text evidence="1">GLC7 phosphatase-regulatory protein involved in GLC7 subcellular redistribution and chromosome segregation.</text>
</comment>
<comment type="subunit">
    <text evidence="1">Interacts with GLC7.</text>
</comment>
<comment type="subcellular location">
    <subcellularLocation>
        <location evidence="1">Cytoplasm</location>
    </subcellularLocation>
</comment>
<comment type="similarity">
    <text evidence="3">Belongs to the GIP4 family.</text>
</comment>
<protein>
    <recommendedName>
        <fullName>GLC7-interacting protein 4</fullName>
    </recommendedName>
</protein>
<sequence>MLARSAASLSTTAATTQSNMSVTSQFMDANDCKFIVYKASQIRLTEMKRLLGVLVPNLKKRSSQNKNIVPLVTYMLPLLAGPVLNVNAALKEKYNQIVQGQEPTKDNKDYDVTPRDWLTYVMDSNTQNQPLEGCELVEFKKELYDKDKQWLTVTRLLKLIDEVISTYNNKFKSANLLKKTYSKSIEDLIKPSELSLCLDLAVLITDYERDTSEASFRKLQWQVIEKFLATLHSKVEPTLKTYYKSLLAYQSGKLMLYKLPFPEWTIHRMFAFTVRMISLMKLFGCELRVLYYPNRKYLNDLKTKLVCENVYKYDLLITQIEKLCADPLYQIKESKEMMQFFQKYPYSLPKSLPQKTHEFFIKKVISTCINHWNNNTKLVEDWVEMWKFCDKNNSAKEKIESSNEEQLIKMYDERYTVDKLVYLEHEEERAKLSNKKSIGIVVKSSSSSSPNKLLRKLSPISGMAKPKVRSTKSPASSSSSNSNSNSALSSGMATPKERSRRSSVDRGLPKGGRLPGLTKTNTNERLVAPLIHISETSSVSNSGSSSINASPLGSRRGSIKDESAARKMVINRTVERTRSKIGNRPRSASLQSNESAALNSVGIVGSPLSNNRLPKPVSNQSQLRSNSLESNSALNRKMVQDTFKHLMANNPKPSNLSHSPTSSPMRPSSPIPSRSNSNKVSSTNNGAILSPEPKGKSKANNSNDKIKTNGVTSINIDNSDNEIVLKPLPHESKDTTTGPVRPVDESVNNLSEGTPAGSESTPESMKSAVGIEGLDKENLNVESGNMESGEPSKKVRFVGVPPMTEAENPKPTRKGWYKKPAVLHYPPVPQQVTMFRDRLRQEGMVFRTSLRDTVAATSNEVGKKGGMMLSLAIDNPPVKEISSHSRFASKLREKLTR</sequence>
<feature type="chain" id="PRO_0000292483" description="GLC7-interacting protein 4">
    <location>
        <begin position="1"/>
        <end position="897"/>
    </location>
</feature>
<feature type="region of interest" description="Disordered" evidence="2">
    <location>
        <begin position="444"/>
        <end position="523"/>
    </location>
</feature>
<feature type="region of interest" description="Disordered" evidence="2">
    <location>
        <begin position="537"/>
        <end position="562"/>
    </location>
</feature>
<feature type="region of interest" description="Disordered" evidence="2">
    <location>
        <begin position="607"/>
        <end position="632"/>
    </location>
</feature>
<feature type="region of interest" description="Disordered" evidence="2">
    <location>
        <begin position="647"/>
        <end position="794"/>
    </location>
</feature>
<feature type="compositionally biased region" description="Low complexity" evidence="2">
    <location>
        <begin position="444"/>
        <end position="459"/>
    </location>
</feature>
<feature type="compositionally biased region" description="Low complexity" evidence="2">
    <location>
        <begin position="473"/>
        <end position="490"/>
    </location>
</feature>
<feature type="compositionally biased region" description="Basic and acidic residues" evidence="2">
    <location>
        <begin position="495"/>
        <end position="508"/>
    </location>
</feature>
<feature type="compositionally biased region" description="Low complexity" evidence="2">
    <location>
        <begin position="537"/>
        <end position="554"/>
    </location>
</feature>
<feature type="compositionally biased region" description="Low complexity" evidence="2">
    <location>
        <begin position="657"/>
        <end position="677"/>
    </location>
</feature>
<feature type="compositionally biased region" description="Polar residues" evidence="2">
    <location>
        <begin position="678"/>
        <end position="687"/>
    </location>
</feature>
<feature type="compositionally biased region" description="Polar residues" evidence="2">
    <location>
        <begin position="698"/>
        <end position="718"/>
    </location>
</feature>
<feature type="compositionally biased region" description="Polar residues" evidence="2">
    <location>
        <begin position="746"/>
        <end position="764"/>
    </location>
</feature>
<dbReference type="EMBL" id="CR380959">
    <property type="protein sequence ID" value="CAG62834.1"/>
    <property type="molecule type" value="Genomic_DNA"/>
</dbReference>
<dbReference type="RefSeq" id="XP_449854.1">
    <property type="nucleotide sequence ID" value="XM_449854.1"/>
</dbReference>
<dbReference type="FunCoup" id="Q6FIU0">
    <property type="interactions" value="115"/>
</dbReference>
<dbReference type="STRING" id="284593.Q6FIU0"/>
<dbReference type="EnsemblFungi" id="CAGL0M11792g-T">
    <property type="protein sequence ID" value="CAGL0M11792g-T-p1"/>
    <property type="gene ID" value="CAGL0M11792g"/>
</dbReference>
<dbReference type="KEGG" id="cgr:2891249"/>
<dbReference type="CGD" id="CAL0137477">
    <property type="gene designation" value="CAGL0M11792g"/>
</dbReference>
<dbReference type="VEuPathDB" id="FungiDB:CAGL0M11792g"/>
<dbReference type="eggNOG" id="ENOG502QRIU">
    <property type="taxonomic scope" value="Eukaryota"/>
</dbReference>
<dbReference type="HOGENOM" id="CLU_021324_0_0_1"/>
<dbReference type="InParanoid" id="Q6FIU0"/>
<dbReference type="OMA" id="WYKKPAV"/>
<dbReference type="Proteomes" id="UP000002428">
    <property type="component" value="Chromosome M"/>
</dbReference>
<dbReference type="GO" id="GO:0005737">
    <property type="term" value="C:cytoplasm"/>
    <property type="evidence" value="ECO:0007669"/>
    <property type="project" value="UniProtKB-SubCell"/>
</dbReference>
<dbReference type="GO" id="GO:0008157">
    <property type="term" value="F:protein phosphatase 1 binding"/>
    <property type="evidence" value="ECO:0007669"/>
    <property type="project" value="InterPro"/>
</dbReference>
<dbReference type="GO" id="GO:0019888">
    <property type="term" value="F:protein phosphatase regulator activity"/>
    <property type="evidence" value="ECO:0007669"/>
    <property type="project" value="InterPro"/>
</dbReference>
<dbReference type="InterPro" id="IPR026241">
    <property type="entry name" value="GIP4"/>
</dbReference>
<dbReference type="PRINTS" id="PR02082">
    <property type="entry name" value="GLC7IP4"/>
</dbReference>
<evidence type="ECO:0000250" key="1"/>
<evidence type="ECO:0000256" key="2">
    <source>
        <dbReference type="SAM" id="MobiDB-lite"/>
    </source>
</evidence>
<evidence type="ECO:0000305" key="3"/>
<gene>
    <name type="primary">GIP4</name>
    <name type="ordered locus">CAGL0M11792g</name>
</gene>
<organism>
    <name type="scientific">Candida glabrata (strain ATCC 2001 / BCRC 20586 / JCM 3761 / NBRC 0622 / NRRL Y-65 / CBS 138)</name>
    <name type="common">Yeast</name>
    <name type="synonym">Nakaseomyces glabratus</name>
    <dbReference type="NCBI Taxonomy" id="284593"/>
    <lineage>
        <taxon>Eukaryota</taxon>
        <taxon>Fungi</taxon>
        <taxon>Dikarya</taxon>
        <taxon>Ascomycota</taxon>
        <taxon>Saccharomycotina</taxon>
        <taxon>Saccharomycetes</taxon>
        <taxon>Saccharomycetales</taxon>
        <taxon>Saccharomycetaceae</taxon>
        <taxon>Nakaseomyces</taxon>
    </lineage>
</organism>
<name>GIP4_CANGA</name>
<accession>Q6FIU0</accession>
<keyword id="KW-0963">Cytoplasm</keyword>
<keyword id="KW-1185">Reference proteome</keyword>